<reference key="1">
    <citation type="journal article" date="2007" name="Photosyn. Res.">
        <title>Complete nucleotide sequence of the freshwater unicellular cyanobacterium Synechococcus elongatus PCC 6301 chromosome: gene content and organization.</title>
        <authorList>
            <person name="Sugita C."/>
            <person name="Ogata K."/>
            <person name="Shikata M."/>
            <person name="Jikuya H."/>
            <person name="Takano J."/>
            <person name="Furumichi M."/>
            <person name="Kanehisa M."/>
            <person name="Omata T."/>
            <person name="Sugiura M."/>
            <person name="Sugita M."/>
        </authorList>
    </citation>
    <scope>NUCLEOTIDE SEQUENCE [LARGE SCALE GENOMIC DNA]</scope>
    <source>
        <strain>ATCC 27144 / PCC 6301 / SAUG 1402/1</strain>
    </source>
</reference>
<protein>
    <recommendedName>
        <fullName evidence="1">Methionyl-tRNA formyltransferase</fullName>
        <ecNumber evidence="1">2.1.2.9</ecNumber>
    </recommendedName>
</protein>
<name>FMT_SYNP6</name>
<feature type="chain" id="PRO_0000083068" description="Methionyl-tRNA formyltransferase">
    <location>
        <begin position="1"/>
        <end position="327"/>
    </location>
</feature>
<feature type="binding site" evidence="1">
    <location>
        <begin position="111"/>
        <end position="114"/>
    </location>
    <ligand>
        <name>(6S)-5,6,7,8-tetrahydrofolate</name>
        <dbReference type="ChEBI" id="CHEBI:57453"/>
    </ligand>
</feature>
<evidence type="ECO:0000255" key="1">
    <source>
        <dbReference type="HAMAP-Rule" id="MF_00182"/>
    </source>
</evidence>
<proteinExistence type="inferred from homology"/>
<keyword id="KW-0648">Protein biosynthesis</keyword>
<keyword id="KW-0808">Transferase</keyword>
<accession>Q5N0J8</accession>
<comment type="function">
    <text evidence="1">Attaches a formyl group to the free amino group of methionyl-tRNA(fMet). The formyl group appears to play a dual role in the initiator identity of N-formylmethionyl-tRNA by promoting its recognition by IF2 and preventing the misappropriation of this tRNA by the elongation apparatus.</text>
</comment>
<comment type="catalytic activity">
    <reaction evidence="1">
        <text>L-methionyl-tRNA(fMet) + (6R)-10-formyltetrahydrofolate = N-formyl-L-methionyl-tRNA(fMet) + (6S)-5,6,7,8-tetrahydrofolate + H(+)</text>
        <dbReference type="Rhea" id="RHEA:24380"/>
        <dbReference type="Rhea" id="RHEA-COMP:9952"/>
        <dbReference type="Rhea" id="RHEA-COMP:9953"/>
        <dbReference type="ChEBI" id="CHEBI:15378"/>
        <dbReference type="ChEBI" id="CHEBI:57453"/>
        <dbReference type="ChEBI" id="CHEBI:78530"/>
        <dbReference type="ChEBI" id="CHEBI:78844"/>
        <dbReference type="ChEBI" id="CHEBI:195366"/>
        <dbReference type="EC" id="2.1.2.9"/>
    </reaction>
</comment>
<comment type="similarity">
    <text evidence="1">Belongs to the Fmt family.</text>
</comment>
<organism>
    <name type="scientific">Synechococcus sp. (strain ATCC 27144 / PCC 6301 / SAUG 1402/1)</name>
    <name type="common">Anacystis nidulans</name>
    <dbReference type="NCBI Taxonomy" id="269084"/>
    <lineage>
        <taxon>Bacteria</taxon>
        <taxon>Bacillati</taxon>
        <taxon>Cyanobacteriota</taxon>
        <taxon>Cyanophyceae</taxon>
        <taxon>Synechococcales</taxon>
        <taxon>Synechococcaceae</taxon>
        <taxon>Synechococcus</taxon>
    </lineage>
</organism>
<gene>
    <name evidence="1" type="primary">fmt</name>
    <name type="ordered locus">syc1982_d</name>
</gene>
<dbReference type="EC" id="2.1.2.9" evidence="1"/>
<dbReference type="EMBL" id="AP008231">
    <property type="protein sequence ID" value="BAD80172.1"/>
    <property type="molecule type" value="Genomic_DNA"/>
</dbReference>
<dbReference type="RefSeq" id="WP_011244292.1">
    <property type="nucleotide sequence ID" value="NZ_CP085785.1"/>
</dbReference>
<dbReference type="SMR" id="Q5N0J8"/>
<dbReference type="GeneID" id="72430986"/>
<dbReference type="KEGG" id="syc:syc1982_d"/>
<dbReference type="eggNOG" id="COG0223">
    <property type="taxonomic scope" value="Bacteria"/>
</dbReference>
<dbReference type="Proteomes" id="UP000001175">
    <property type="component" value="Chromosome"/>
</dbReference>
<dbReference type="GO" id="GO:0005829">
    <property type="term" value="C:cytosol"/>
    <property type="evidence" value="ECO:0007669"/>
    <property type="project" value="TreeGrafter"/>
</dbReference>
<dbReference type="GO" id="GO:0004479">
    <property type="term" value="F:methionyl-tRNA formyltransferase activity"/>
    <property type="evidence" value="ECO:0007669"/>
    <property type="project" value="UniProtKB-UniRule"/>
</dbReference>
<dbReference type="CDD" id="cd08646">
    <property type="entry name" value="FMT_core_Met-tRNA-FMT_N"/>
    <property type="match status" value="1"/>
</dbReference>
<dbReference type="CDD" id="cd08704">
    <property type="entry name" value="Met_tRNA_FMT_C"/>
    <property type="match status" value="1"/>
</dbReference>
<dbReference type="FunFam" id="3.40.50.12230:FF:000001">
    <property type="entry name" value="Methionyl-tRNA formyltransferase"/>
    <property type="match status" value="1"/>
</dbReference>
<dbReference type="Gene3D" id="3.40.50.12230">
    <property type="match status" value="1"/>
</dbReference>
<dbReference type="HAMAP" id="MF_00182">
    <property type="entry name" value="Formyl_trans"/>
    <property type="match status" value="1"/>
</dbReference>
<dbReference type="InterPro" id="IPR005794">
    <property type="entry name" value="Fmt"/>
</dbReference>
<dbReference type="InterPro" id="IPR005793">
    <property type="entry name" value="Formyl_trans_C"/>
</dbReference>
<dbReference type="InterPro" id="IPR002376">
    <property type="entry name" value="Formyl_transf_N"/>
</dbReference>
<dbReference type="InterPro" id="IPR036477">
    <property type="entry name" value="Formyl_transf_N_sf"/>
</dbReference>
<dbReference type="InterPro" id="IPR011034">
    <property type="entry name" value="Formyl_transferase-like_C_sf"/>
</dbReference>
<dbReference type="InterPro" id="IPR044135">
    <property type="entry name" value="Met-tRNA-FMT_C"/>
</dbReference>
<dbReference type="InterPro" id="IPR041711">
    <property type="entry name" value="Met-tRNA-FMT_N"/>
</dbReference>
<dbReference type="NCBIfam" id="TIGR00460">
    <property type="entry name" value="fmt"/>
    <property type="match status" value="1"/>
</dbReference>
<dbReference type="PANTHER" id="PTHR11138">
    <property type="entry name" value="METHIONYL-TRNA FORMYLTRANSFERASE"/>
    <property type="match status" value="1"/>
</dbReference>
<dbReference type="PANTHER" id="PTHR11138:SF5">
    <property type="entry name" value="METHIONYL-TRNA FORMYLTRANSFERASE, MITOCHONDRIAL"/>
    <property type="match status" value="1"/>
</dbReference>
<dbReference type="Pfam" id="PF02911">
    <property type="entry name" value="Formyl_trans_C"/>
    <property type="match status" value="1"/>
</dbReference>
<dbReference type="Pfam" id="PF00551">
    <property type="entry name" value="Formyl_trans_N"/>
    <property type="match status" value="1"/>
</dbReference>
<dbReference type="SUPFAM" id="SSF50486">
    <property type="entry name" value="FMT C-terminal domain-like"/>
    <property type="match status" value="1"/>
</dbReference>
<dbReference type="SUPFAM" id="SSF53328">
    <property type="entry name" value="Formyltransferase"/>
    <property type="match status" value="1"/>
</dbReference>
<sequence>MRVVFFGTPQFAVPTLQQLLDAPDVEVMAVVSQPDRRRGRGNQVSASPVKALAIAYDLPVWQPERLRRDPEVLSQLQQTQADAFVVVAYGQLLPAEVLAMPRLGCINVHGSLLPAYRGAAPIQWSLINGDRETGIVTMQMDVGMDTGPMLLRWTTPIALDDNSQTLGDRLATAGAELLLQTLRQLDQGHLTAISQNEAEATYARLLQKEDFQLSWDQSALELHNRIRGLYPGASLPVQGDRLKVLASLPLGLGLLLSAAYADWQDWQPDPAAQPGTVLAIAKSLGPIVATREGALLLLQVQPAGRKPLSGWDWANGLRLQEGLSLLE</sequence>